<reference key="1">
    <citation type="journal article" date="2003" name="Lancet">
        <title>Genome sequence of Vibrio parahaemolyticus: a pathogenic mechanism distinct from that of V. cholerae.</title>
        <authorList>
            <person name="Makino K."/>
            <person name="Oshima K."/>
            <person name="Kurokawa K."/>
            <person name="Yokoyama K."/>
            <person name="Uda T."/>
            <person name="Tagomori K."/>
            <person name="Iijima Y."/>
            <person name="Najima M."/>
            <person name="Nakano M."/>
            <person name="Yamashita A."/>
            <person name="Kubota Y."/>
            <person name="Kimura S."/>
            <person name="Yasunaga T."/>
            <person name="Honda T."/>
            <person name="Shinagawa H."/>
            <person name="Hattori M."/>
            <person name="Iida T."/>
        </authorList>
    </citation>
    <scope>NUCLEOTIDE SEQUENCE [LARGE SCALE GENOMIC DNA]</scope>
    <source>
        <strain>RIMD 2210633</strain>
    </source>
</reference>
<gene>
    <name evidence="1" type="primary">dnaJ</name>
    <name type="ordered locus">VP0654</name>
</gene>
<proteinExistence type="inferred from homology"/>
<feature type="chain" id="PRO_0000070930" description="Chaperone protein DnaJ">
    <location>
        <begin position="1"/>
        <end position="381"/>
    </location>
</feature>
<feature type="domain" description="J" evidence="1">
    <location>
        <begin position="5"/>
        <end position="70"/>
    </location>
</feature>
<feature type="repeat" description="CXXCXGXG motif">
    <location>
        <begin position="149"/>
        <end position="156"/>
    </location>
</feature>
<feature type="repeat" description="CXXCXGXG motif">
    <location>
        <begin position="166"/>
        <end position="173"/>
    </location>
</feature>
<feature type="repeat" description="CXXCXGXG motif">
    <location>
        <begin position="188"/>
        <end position="195"/>
    </location>
</feature>
<feature type="repeat" description="CXXCXGXG motif">
    <location>
        <begin position="202"/>
        <end position="209"/>
    </location>
</feature>
<feature type="zinc finger region" description="CR-type" evidence="1">
    <location>
        <begin position="136"/>
        <end position="214"/>
    </location>
</feature>
<feature type="binding site" evidence="1">
    <location>
        <position position="149"/>
    </location>
    <ligand>
        <name>Zn(2+)</name>
        <dbReference type="ChEBI" id="CHEBI:29105"/>
        <label>1</label>
    </ligand>
</feature>
<feature type="binding site" evidence="1">
    <location>
        <position position="152"/>
    </location>
    <ligand>
        <name>Zn(2+)</name>
        <dbReference type="ChEBI" id="CHEBI:29105"/>
        <label>1</label>
    </ligand>
</feature>
<feature type="binding site" evidence="1">
    <location>
        <position position="166"/>
    </location>
    <ligand>
        <name>Zn(2+)</name>
        <dbReference type="ChEBI" id="CHEBI:29105"/>
        <label>2</label>
    </ligand>
</feature>
<feature type="binding site" evidence="1">
    <location>
        <position position="169"/>
    </location>
    <ligand>
        <name>Zn(2+)</name>
        <dbReference type="ChEBI" id="CHEBI:29105"/>
        <label>2</label>
    </ligand>
</feature>
<feature type="binding site" evidence="1">
    <location>
        <position position="188"/>
    </location>
    <ligand>
        <name>Zn(2+)</name>
        <dbReference type="ChEBI" id="CHEBI:29105"/>
        <label>2</label>
    </ligand>
</feature>
<feature type="binding site" evidence="1">
    <location>
        <position position="191"/>
    </location>
    <ligand>
        <name>Zn(2+)</name>
        <dbReference type="ChEBI" id="CHEBI:29105"/>
        <label>2</label>
    </ligand>
</feature>
<feature type="binding site" evidence="1">
    <location>
        <position position="202"/>
    </location>
    <ligand>
        <name>Zn(2+)</name>
        <dbReference type="ChEBI" id="CHEBI:29105"/>
        <label>1</label>
    </ligand>
</feature>
<feature type="binding site" evidence="1">
    <location>
        <position position="205"/>
    </location>
    <ligand>
        <name>Zn(2+)</name>
        <dbReference type="ChEBI" id="CHEBI:29105"/>
        <label>1</label>
    </ligand>
</feature>
<name>DNAJ_VIBPA</name>
<comment type="function">
    <text evidence="1">Participates actively in the response to hyperosmotic and heat shock by preventing the aggregation of stress-denatured proteins and by disaggregating proteins, also in an autonomous, DnaK-independent fashion. Unfolded proteins bind initially to DnaJ; upon interaction with the DnaJ-bound protein, DnaK hydrolyzes its bound ATP, resulting in the formation of a stable complex. GrpE releases ADP from DnaK; ATP binding to DnaK triggers the release of the substrate protein, thus completing the reaction cycle. Several rounds of ATP-dependent interactions between DnaJ, DnaK and GrpE are required for fully efficient folding. Also involved, together with DnaK and GrpE, in the DNA replication of plasmids through activation of initiation proteins.</text>
</comment>
<comment type="cofactor">
    <cofactor evidence="1">
        <name>Zn(2+)</name>
        <dbReference type="ChEBI" id="CHEBI:29105"/>
    </cofactor>
    <text evidence="1">Binds 2 Zn(2+) ions per monomer.</text>
</comment>
<comment type="subunit">
    <text evidence="1">Homodimer.</text>
</comment>
<comment type="subcellular location">
    <subcellularLocation>
        <location evidence="1">Cytoplasm</location>
    </subcellularLocation>
</comment>
<comment type="domain">
    <text evidence="1">The J domain is necessary and sufficient to stimulate DnaK ATPase activity. Zinc center 1 plays an important role in the autonomous, DnaK-independent chaperone activity of DnaJ. Zinc center 2 is essential for interaction with DnaK and for DnaJ activity.</text>
</comment>
<comment type="similarity">
    <text evidence="1">Belongs to the DnaJ family.</text>
</comment>
<dbReference type="EMBL" id="BA000031">
    <property type="protein sequence ID" value="BAC58917.1"/>
    <property type="molecule type" value="Genomic_DNA"/>
</dbReference>
<dbReference type="RefSeq" id="NP_797033.1">
    <property type="nucleotide sequence ID" value="NC_004603.1"/>
</dbReference>
<dbReference type="RefSeq" id="WP_005482993.1">
    <property type="nucleotide sequence ID" value="NC_004603.1"/>
</dbReference>
<dbReference type="SMR" id="Q87RX2"/>
<dbReference type="GeneID" id="1188129"/>
<dbReference type="KEGG" id="vpa:VP0654"/>
<dbReference type="PATRIC" id="fig|223926.6.peg.624"/>
<dbReference type="eggNOG" id="COG0484">
    <property type="taxonomic scope" value="Bacteria"/>
</dbReference>
<dbReference type="HOGENOM" id="CLU_017633_0_7_6"/>
<dbReference type="Proteomes" id="UP000002493">
    <property type="component" value="Chromosome 1"/>
</dbReference>
<dbReference type="GO" id="GO:0005737">
    <property type="term" value="C:cytoplasm"/>
    <property type="evidence" value="ECO:0007669"/>
    <property type="project" value="UniProtKB-SubCell"/>
</dbReference>
<dbReference type="GO" id="GO:0005524">
    <property type="term" value="F:ATP binding"/>
    <property type="evidence" value="ECO:0007669"/>
    <property type="project" value="InterPro"/>
</dbReference>
<dbReference type="GO" id="GO:0031072">
    <property type="term" value="F:heat shock protein binding"/>
    <property type="evidence" value="ECO:0007669"/>
    <property type="project" value="InterPro"/>
</dbReference>
<dbReference type="GO" id="GO:0051082">
    <property type="term" value="F:unfolded protein binding"/>
    <property type="evidence" value="ECO:0007669"/>
    <property type="project" value="UniProtKB-UniRule"/>
</dbReference>
<dbReference type="GO" id="GO:0008270">
    <property type="term" value="F:zinc ion binding"/>
    <property type="evidence" value="ECO:0007669"/>
    <property type="project" value="UniProtKB-UniRule"/>
</dbReference>
<dbReference type="GO" id="GO:0051085">
    <property type="term" value="P:chaperone cofactor-dependent protein refolding"/>
    <property type="evidence" value="ECO:0007669"/>
    <property type="project" value="TreeGrafter"/>
</dbReference>
<dbReference type="GO" id="GO:0006260">
    <property type="term" value="P:DNA replication"/>
    <property type="evidence" value="ECO:0007669"/>
    <property type="project" value="UniProtKB-KW"/>
</dbReference>
<dbReference type="GO" id="GO:0042026">
    <property type="term" value="P:protein refolding"/>
    <property type="evidence" value="ECO:0007669"/>
    <property type="project" value="TreeGrafter"/>
</dbReference>
<dbReference type="GO" id="GO:0009408">
    <property type="term" value="P:response to heat"/>
    <property type="evidence" value="ECO:0007669"/>
    <property type="project" value="InterPro"/>
</dbReference>
<dbReference type="CDD" id="cd06257">
    <property type="entry name" value="DnaJ"/>
    <property type="match status" value="1"/>
</dbReference>
<dbReference type="CDD" id="cd10747">
    <property type="entry name" value="DnaJ_C"/>
    <property type="match status" value="1"/>
</dbReference>
<dbReference type="CDD" id="cd10719">
    <property type="entry name" value="DnaJ_zf"/>
    <property type="match status" value="1"/>
</dbReference>
<dbReference type="FunFam" id="1.10.287.110:FF:000003">
    <property type="entry name" value="Molecular chaperone DnaJ"/>
    <property type="match status" value="1"/>
</dbReference>
<dbReference type="FunFam" id="2.10.230.10:FF:000002">
    <property type="entry name" value="Molecular chaperone DnaJ"/>
    <property type="match status" value="1"/>
</dbReference>
<dbReference type="FunFam" id="2.60.260.20:FF:000004">
    <property type="entry name" value="Molecular chaperone DnaJ"/>
    <property type="match status" value="1"/>
</dbReference>
<dbReference type="Gene3D" id="1.10.287.110">
    <property type="entry name" value="DnaJ domain"/>
    <property type="match status" value="1"/>
</dbReference>
<dbReference type="Gene3D" id="2.10.230.10">
    <property type="entry name" value="Heat shock protein DnaJ, cysteine-rich domain"/>
    <property type="match status" value="1"/>
</dbReference>
<dbReference type="Gene3D" id="2.60.260.20">
    <property type="entry name" value="Urease metallochaperone UreE, N-terminal domain"/>
    <property type="match status" value="2"/>
</dbReference>
<dbReference type="HAMAP" id="MF_01152">
    <property type="entry name" value="DnaJ"/>
    <property type="match status" value="1"/>
</dbReference>
<dbReference type="InterPro" id="IPR012724">
    <property type="entry name" value="DnaJ"/>
</dbReference>
<dbReference type="InterPro" id="IPR002939">
    <property type="entry name" value="DnaJ_C"/>
</dbReference>
<dbReference type="InterPro" id="IPR001623">
    <property type="entry name" value="DnaJ_domain"/>
</dbReference>
<dbReference type="InterPro" id="IPR018253">
    <property type="entry name" value="DnaJ_domain_CS"/>
</dbReference>
<dbReference type="InterPro" id="IPR008971">
    <property type="entry name" value="HSP40/DnaJ_pept-bd"/>
</dbReference>
<dbReference type="InterPro" id="IPR001305">
    <property type="entry name" value="HSP_DnaJ_Cys-rich_dom"/>
</dbReference>
<dbReference type="InterPro" id="IPR036410">
    <property type="entry name" value="HSP_DnaJ_Cys-rich_dom_sf"/>
</dbReference>
<dbReference type="InterPro" id="IPR036869">
    <property type="entry name" value="J_dom_sf"/>
</dbReference>
<dbReference type="NCBIfam" id="TIGR02349">
    <property type="entry name" value="DnaJ_bact"/>
    <property type="match status" value="1"/>
</dbReference>
<dbReference type="NCBIfam" id="NF008035">
    <property type="entry name" value="PRK10767.1"/>
    <property type="match status" value="1"/>
</dbReference>
<dbReference type="PANTHER" id="PTHR43096:SF48">
    <property type="entry name" value="CHAPERONE PROTEIN DNAJ"/>
    <property type="match status" value="1"/>
</dbReference>
<dbReference type="PANTHER" id="PTHR43096">
    <property type="entry name" value="DNAJ HOMOLOG 1, MITOCHONDRIAL-RELATED"/>
    <property type="match status" value="1"/>
</dbReference>
<dbReference type="Pfam" id="PF00226">
    <property type="entry name" value="DnaJ"/>
    <property type="match status" value="1"/>
</dbReference>
<dbReference type="Pfam" id="PF01556">
    <property type="entry name" value="DnaJ_C"/>
    <property type="match status" value="1"/>
</dbReference>
<dbReference type="Pfam" id="PF00684">
    <property type="entry name" value="DnaJ_CXXCXGXG"/>
    <property type="match status" value="1"/>
</dbReference>
<dbReference type="PRINTS" id="PR00625">
    <property type="entry name" value="JDOMAIN"/>
</dbReference>
<dbReference type="SMART" id="SM00271">
    <property type="entry name" value="DnaJ"/>
    <property type="match status" value="1"/>
</dbReference>
<dbReference type="SUPFAM" id="SSF46565">
    <property type="entry name" value="Chaperone J-domain"/>
    <property type="match status" value="1"/>
</dbReference>
<dbReference type="SUPFAM" id="SSF57938">
    <property type="entry name" value="DnaJ/Hsp40 cysteine-rich domain"/>
    <property type="match status" value="1"/>
</dbReference>
<dbReference type="SUPFAM" id="SSF49493">
    <property type="entry name" value="HSP40/DnaJ peptide-binding domain"/>
    <property type="match status" value="2"/>
</dbReference>
<dbReference type="PROSITE" id="PS00636">
    <property type="entry name" value="DNAJ_1"/>
    <property type="match status" value="1"/>
</dbReference>
<dbReference type="PROSITE" id="PS50076">
    <property type="entry name" value="DNAJ_2"/>
    <property type="match status" value="1"/>
</dbReference>
<dbReference type="PROSITE" id="PS51188">
    <property type="entry name" value="ZF_CR"/>
    <property type="match status" value="1"/>
</dbReference>
<evidence type="ECO:0000255" key="1">
    <source>
        <dbReference type="HAMAP-Rule" id="MF_01152"/>
    </source>
</evidence>
<accession>Q87RX2</accession>
<sequence>MSKRDFYEVLGVSRDASERDIKKAYKRLAMKFHPDRNQGDESAADKFKEVKEAYEVLTDSQKKAAYDQYGHAAFEQGGGGFGGGFGGGGADFGDIFGDVFGDIFGGGRRGGGGHRAQRGADLRYNMELTLEEAVRGVTKEIEVPTLVHCDSCDGSGAKKGSSAETCGTCHGHGQVQMRQGFFAVQQTCPTCHGKGKIIKDPCNECHGQGRKQKTKTLNVKIPAGVDTGDRIRLSGEGEAGEMGAPSGDLYVQVHVKEHHIFERDGNNLYCEVPVSFAMAALGGEVEVPTLDGRVSLKVPSETQTGRMFRMRGKGVKGVRGGGIGDLIVKLVVETPVNLSSRQKELLKEFEESCGGEAATKHKPKSEGFFNGVKKFFDDLTS</sequence>
<organism>
    <name type="scientific">Vibrio parahaemolyticus serotype O3:K6 (strain RIMD 2210633)</name>
    <dbReference type="NCBI Taxonomy" id="223926"/>
    <lineage>
        <taxon>Bacteria</taxon>
        <taxon>Pseudomonadati</taxon>
        <taxon>Pseudomonadota</taxon>
        <taxon>Gammaproteobacteria</taxon>
        <taxon>Vibrionales</taxon>
        <taxon>Vibrionaceae</taxon>
        <taxon>Vibrio</taxon>
    </lineage>
</organism>
<protein>
    <recommendedName>
        <fullName evidence="1">Chaperone protein DnaJ</fullName>
    </recommendedName>
</protein>
<keyword id="KW-0143">Chaperone</keyword>
<keyword id="KW-0963">Cytoplasm</keyword>
<keyword id="KW-0235">DNA replication</keyword>
<keyword id="KW-0479">Metal-binding</keyword>
<keyword id="KW-0677">Repeat</keyword>
<keyword id="KW-0346">Stress response</keyword>
<keyword id="KW-0862">Zinc</keyword>
<keyword id="KW-0863">Zinc-finger</keyword>